<feature type="chain" id="PRO_0000445997" description="FT-interacting protein 3">
    <location>
        <begin position="1"/>
        <end position="773"/>
    </location>
</feature>
<feature type="transmembrane region" description="Helical" evidence="3">
    <location>
        <begin position="574"/>
        <end position="594"/>
    </location>
</feature>
<feature type="transmembrane region" description="Helical" evidence="3">
    <location>
        <begin position="608"/>
        <end position="628"/>
    </location>
</feature>
<feature type="transmembrane region" description="Helical" evidence="3">
    <location>
        <begin position="716"/>
        <end position="736"/>
    </location>
</feature>
<feature type="domain" description="C2 1" evidence="4">
    <location>
        <begin position="22"/>
        <end position="142"/>
    </location>
</feature>
<feature type="domain" description="C2 2" evidence="4">
    <location>
        <begin position="181"/>
        <end position="305"/>
    </location>
</feature>
<feature type="domain" description="C2 3" evidence="4">
    <location>
        <begin position="345"/>
        <end position="471"/>
    </location>
</feature>
<feature type="region of interest" description="Disordered" evidence="5">
    <location>
        <begin position="1"/>
        <end position="24"/>
    </location>
</feature>
<feature type="compositionally biased region" description="Basic and acidic residues" evidence="5">
    <location>
        <begin position="1"/>
        <end position="16"/>
    </location>
</feature>
<feature type="binding site" evidence="4">
    <location>
        <position position="55"/>
    </location>
    <ligand>
        <name>Ca(2+)</name>
        <dbReference type="ChEBI" id="CHEBI:29108"/>
        <label>1</label>
    </ligand>
</feature>
<feature type="binding site" evidence="4">
    <location>
        <position position="55"/>
    </location>
    <ligand>
        <name>Ca(2+)</name>
        <dbReference type="ChEBI" id="CHEBI:29108"/>
        <label>2</label>
    </ligand>
</feature>
<feature type="binding site" evidence="4">
    <location>
        <position position="61"/>
    </location>
    <ligand>
        <name>Ca(2+)</name>
        <dbReference type="ChEBI" id="CHEBI:29108"/>
        <label>1</label>
    </ligand>
</feature>
<feature type="binding site" evidence="4">
    <location>
        <position position="108"/>
    </location>
    <ligand>
        <name>Ca(2+)</name>
        <dbReference type="ChEBI" id="CHEBI:29108"/>
        <label>1</label>
    </ligand>
</feature>
<feature type="binding site" evidence="4">
    <location>
        <position position="108"/>
    </location>
    <ligand>
        <name>Ca(2+)</name>
        <dbReference type="ChEBI" id="CHEBI:29108"/>
        <label>2</label>
    </ligand>
</feature>
<feature type="binding site" evidence="4">
    <location>
        <position position="110"/>
    </location>
    <ligand>
        <name>Ca(2+)</name>
        <dbReference type="ChEBI" id="CHEBI:29108"/>
        <label>1</label>
    </ligand>
</feature>
<feature type="binding site" evidence="4">
    <location>
        <position position="110"/>
    </location>
    <ligand>
        <name>Ca(2+)</name>
        <dbReference type="ChEBI" id="CHEBI:29108"/>
        <label>2</label>
    </ligand>
</feature>
<feature type="binding site" evidence="4">
    <location>
        <position position="115"/>
    </location>
    <ligand>
        <name>Ca(2+)</name>
        <dbReference type="ChEBI" id="CHEBI:29108"/>
        <label>2</label>
    </ligand>
</feature>
<feature type="sequence conflict" description="In Ref. 4; BAF01685." evidence="10" ref="4">
    <original>V</original>
    <variation>A</variation>
    <location>
        <position position="280"/>
    </location>
</feature>
<feature type="sequence conflict" description="In Ref. 3; AAK53020/AAM52232." evidence="10" ref="3">
    <original>R</original>
    <variation>Q</variation>
    <location>
        <position position="541"/>
    </location>
</feature>
<comment type="function">
    <text evidence="7 8">Required for proliferation and differentiation of shoot stem cells in the shoot apical meristem (SAM), thus determining the appropriate balance between the maintenance of shoot stem cells and their differentiation into other aboveground plant parts via the control of subcellular localization and intercellular trafficking of STM in the shoot apex (PubMed:29742441). Prevents intracellular trafficking of STM to the plasma membrane in cells in the peripheral shoot meristem region thus facilitating STM recycling to the nucleus to maintain stem cells (PubMed:29742441). May function as a signaling molecule by regulating the trafficking of other regulators (PubMed:29259105).</text>
</comment>
<comment type="cofactor">
    <cofactor evidence="4">
        <name>Ca(2+)</name>
        <dbReference type="ChEBI" id="CHEBI:29108"/>
    </cofactor>
</comment>
<comment type="subunit">
    <text evidence="7">Interacts with and regulates subcellular localization and trafficking of STM.</text>
</comment>
<comment type="subcellular location">
    <subcellularLocation>
        <location evidence="2">Endoplasmic reticulum membrane</location>
        <topology evidence="3">Multi-pass membrane protein</topology>
    </subcellularLocation>
    <subcellularLocation>
        <location evidence="6 7">Cytoplasm</location>
    </subcellularLocation>
    <subcellularLocation>
        <location evidence="1">Vesicle</location>
    </subcellularLocation>
    <subcellularLocation>
        <location evidence="6">Cell membrane</location>
        <topology evidence="3">Multi-pass membrane protein</topology>
    </subcellularLocation>
    <subcellularLocation>
        <location evidence="6">Endosome membrane</location>
        <topology evidence="3">Multi-pass membrane protein</topology>
    </subcellularLocation>
    <subcellularLocation>
        <location evidence="1">Golgi apparatus membrane</location>
        <topology evidence="3">Multi-pass membrane protein</topology>
    </subcellularLocation>
</comment>
<comment type="tissue specificity">
    <text evidence="6 7">Accumulates in vascular tissues, leaf primordia and flowers (PubMed:29259105). Highly expressed in roots meristems and in both vegetative and inflorescence shoot apical meristems (SAMs) (PubMed:29259105, PubMed:29742441).</text>
</comment>
<comment type="developmental stage">
    <text evidence="6">Present in developing flowers.</text>
</comment>
<comment type="disruption phenotype">
    <text evidence="7">No visible phenotypes. Plants lacking both FTIP3 and FTIP4 have a dwarf and bushy phenotype due to an accelerated stem cell differentiation causing early termination of shoot apices associated with an increased STM localization to the plasma membrane, but compromises nuclear localization.</text>
</comment>
<comment type="similarity">
    <text evidence="10">Belongs to the MCTP family.</text>
</comment>
<organism>
    <name type="scientific">Arabidopsis thaliana</name>
    <name type="common">Mouse-ear cress</name>
    <dbReference type="NCBI Taxonomy" id="3702"/>
    <lineage>
        <taxon>Eukaryota</taxon>
        <taxon>Viridiplantae</taxon>
        <taxon>Streptophyta</taxon>
        <taxon>Embryophyta</taxon>
        <taxon>Tracheophyta</taxon>
        <taxon>Spermatophyta</taxon>
        <taxon>Magnoliopsida</taxon>
        <taxon>eudicotyledons</taxon>
        <taxon>Gunneridae</taxon>
        <taxon>Pentapetalae</taxon>
        <taxon>rosids</taxon>
        <taxon>malvids</taxon>
        <taxon>Brassicales</taxon>
        <taxon>Brassicaceae</taxon>
        <taxon>Camelineae</taxon>
        <taxon>Arabidopsis</taxon>
    </lineage>
</organism>
<dbReference type="EMBL" id="AL132977">
    <property type="protein sequence ID" value="CAB67616.1"/>
    <property type="molecule type" value="Genomic_DNA"/>
</dbReference>
<dbReference type="EMBL" id="CP002686">
    <property type="protein sequence ID" value="AEE79712.1"/>
    <property type="molecule type" value="Genomic_DNA"/>
</dbReference>
<dbReference type="EMBL" id="CP002686">
    <property type="protein sequence ID" value="ANM65757.1"/>
    <property type="molecule type" value="Genomic_DNA"/>
</dbReference>
<dbReference type="EMBL" id="CP002686">
    <property type="protein sequence ID" value="ANM65758.1"/>
    <property type="molecule type" value="Genomic_DNA"/>
</dbReference>
<dbReference type="EMBL" id="CP002686">
    <property type="protein sequence ID" value="ANM65759.1"/>
    <property type="molecule type" value="Genomic_DNA"/>
</dbReference>
<dbReference type="EMBL" id="AF375436">
    <property type="protein sequence ID" value="AAK53020.1"/>
    <property type="molecule type" value="mRNA"/>
</dbReference>
<dbReference type="EMBL" id="AY120689">
    <property type="protein sequence ID" value="AAM52232.1"/>
    <property type="molecule type" value="mRNA"/>
</dbReference>
<dbReference type="EMBL" id="AK229856">
    <property type="protein sequence ID" value="BAF01685.1"/>
    <property type="molecule type" value="mRNA"/>
</dbReference>
<dbReference type="PIR" id="T46010">
    <property type="entry name" value="T46010"/>
</dbReference>
<dbReference type="RefSeq" id="NP_001327704.1">
    <property type="nucleotide sequence ID" value="NM_001339898.1"/>
</dbReference>
<dbReference type="RefSeq" id="NP_001327705.1">
    <property type="nucleotide sequence ID" value="NM_001339896.1"/>
</dbReference>
<dbReference type="RefSeq" id="NP_001327706.1">
    <property type="nucleotide sequence ID" value="NM_001339897.1"/>
</dbReference>
<dbReference type="RefSeq" id="NP_191347.1">
    <property type="nucleotide sequence ID" value="NM_115650.5"/>
</dbReference>
<dbReference type="SMR" id="Q9M2R0"/>
<dbReference type="FunCoup" id="Q9M2R0">
    <property type="interactions" value="609"/>
</dbReference>
<dbReference type="IntAct" id="Q9M2R0">
    <property type="interactions" value="3"/>
</dbReference>
<dbReference type="STRING" id="3702.Q9M2R0"/>
<dbReference type="PaxDb" id="3702-AT3G57880.1"/>
<dbReference type="ProteomicsDB" id="189223"/>
<dbReference type="EnsemblPlants" id="AT3G57880.1">
    <property type="protein sequence ID" value="AT3G57880.1"/>
    <property type="gene ID" value="AT3G57880"/>
</dbReference>
<dbReference type="EnsemblPlants" id="AT3G57880.2">
    <property type="protein sequence ID" value="AT3G57880.2"/>
    <property type="gene ID" value="AT3G57880"/>
</dbReference>
<dbReference type="EnsemblPlants" id="AT3G57880.3">
    <property type="protein sequence ID" value="AT3G57880.3"/>
    <property type="gene ID" value="AT3G57880"/>
</dbReference>
<dbReference type="EnsemblPlants" id="AT3G57880.4">
    <property type="protein sequence ID" value="AT3G57880.4"/>
    <property type="gene ID" value="AT3G57880"/>
</dbReference>
<dbReference type="GeneID" id="824957"/>
<dbReference type="Gramene" id="AT3G57880.1">
    <property type="protein sequence ID" value="AT3G57880.1"/>
    <property type="gene ID" value="AT3G57880"/>
</dbReference>
<dbReference type="Gramene" id="AT3G57880.2">
    <property type="protein sequence ID" value="AT3G57880.2"/>
    <property type="gene ID" value="AT3G57880"/>
</dbReference>
<dbReference type="Gramene" id="AT3G57880.3">
    <property type="protein sequence ID" value="AT3G57880.3"/>
    <property type="gene ID" value="AT3G57880"/>
</dbReference>
<dbReference type="Gramene" id="AT3G57880.4">
    <property type="protein sequence ID" value="AT3G57880.4"/>
    <property type="gene ID" value="AT3G57880"/>
</dbReference>
<dbReference type="KEGG" id="ath:AT3G57880"/>
<dbReference type="Araport" id="AT3G57880"/>
<dbReference type="TAIR" id="AT3G57880">
    <property type="gene designation" value="MCTP3"/>
</dbReference>
<dbReference type="eggNOG" id="ENOG502R77N">
    <property type="taxonomic scope" value="Eukaryota"/>
</dbReference>
<dbReference type="HOGENOM" id="CLU_003762_1_0_1"/>
<dbReference type="InParanoid" id="Q9M2R0"/>
<dbReference type="OMA" id="DCGPTLE"/>
<dbReference type="OrthoDB" id="67700at2759"/>
<dbReference type="PhylomeDB" id="Q9M2R0"/>
<dbReference type="PRO" id="PR:Q9M2R0"/>
<dbReference type="Proteomes" id="UP000006548">
    <property type="component" value="Chromosome 3"/>
</dbReference>
<dbReference type="ExpressionAtlas" id="Q9M2R0">
    <property type="expression patterns" value="baseline and differential"/>
</dbReference>
<dbReference type="GO" id="GO:0005737">
    <property type="term" value="C:cytoplasm"/>
    <property type="evidence" value="ECO:0000314"/>
    <property type="project" value="TAIR"/>
</dbReference>
<dbReference type="GO" id="GO:0005829">
    <property type="term" value="C:cytosol"/>
    <property type="evidence" value="ECO:0000314"/>
    <property type="project" value="TAIR"/>
</dbReference>
<dbReference type="GO" id="GO:0005783">
    <property type="term" value="C:endoplasmic reticulum"/>
    <property type="evidence" value="ECO:0007005"/>
    <property type="project" value="TAIR"/>
</dbReference>
<dbReference type="GO" id="GO:0005789">
    <property type="term" value="C:endoplasmic reticulum membrane"/>
    <property type="evidence" value="ECO:0007669"/>
    <property type="project" value="UniProtKB-SubCell"/>
</dbReference>
<dbReference type="GO" id="GO:0005768">
    <property type="term" value="C:endosome"/>
    <property type="evidence" value="ECO:0000314"/>
    <property type="project" value="UniProtKB"/>
</dbReference>
<dbReference type="GO" id="GO:0010008">
    <property type="term" value="C:endosome membrane"/>
    <property type="evidence" value="ECO:0007669"/>
    <property type="project" value="UniProtKB-SubCell"/>
</dbReference>
<dbReference type="GO" id="GO:0000139">
    <property type="term" value="C:Golgi membrane"/>
    <property type="evidence" value="ECO:0007669"/>
    <property type="project" value="UniProtKB-SubCell"/>
</dbReference>
<dbReference type="GO" id="GO:0009505">
    <property type="term" value="C:plant-type cell wall"/>
    <property type="evidence" value="ECO:0007005"/>
    <property type="project" value="TAIR"/>
</dbReference>
<dbReference type="GO" id="GO:0005886">
    <property type="term" value="C:plasma membrane"/>
    <property type="evidence" value="ECO:0000314"/>
    <property type="project" value="UniProtKB"/>
</dbReference>
<dbReference type="GO" id="GO:0009506">
    <property type="term" value="C:plasmodesma"/>
    <property type="evidence" value="ECO:0007005"/>
    <property type="project" value="TAIR"/>
</dbReference>
<dbReference type="GO" id="GO:0016757">
    <property type="term" value="F:glycosyltransferase activity"/>
    <property type="evidence" value="ECO:0007669"/>
    <property type="project" value="UniProtKB-KW"/>
</dbReference>
<dbReference type="GO" id="GO:0046872">
    <property type="term" value="F:metal ion binding"/>
    <property type="evidence" value="ECO:0007669"/>
    <property type="project" value="UniProtKB-KW"/>
</dbReference>
<dbReference type="GO" id="GO:1902182">
    <property type="term" value="P:shoot apical meristem development"/>
    <property type="evidence" value="ECO:0000316"/>
    <property type="project" value="TAIR"/>
</dbReference>
<dbReference type="CDD" id="cd08378">
    <property type="entry name" value="C2B_MCTP_PRT_plant"/>
    <property type="match status" value="1"/>
</dbReference>
<dbReference type="CDD" id="cd04019">
    <property type="entry name" value="C2C_MCTP_PRT_plant"/>
    <property type="match status" value="1"/>
</dbReference>
<dbReference type="CDD" id="cd08379">
    <property type="entry name" value="C2D_MCTP_PRT_plant"/>
    <property type="match status" value="1"/>
</dbReference>
<dbReference type="FunFam" id="2.60.40.150:FF:000090">
    <property type="entry name" value="C2 domain-containing protein"/>
    <property type="match status" value="1"/>
</dbReference>
<dbReference type="FunFam" id="2.60.40.150:FF:000119">
    <property type="entry name" value="C2 domain-containing protein"/>
    <property type="match status" value="1"/>
</dbReference>
<dbReference type="FunFam" id="2.60.40.150:FF:000128">
    <property type="entry name" value="C2 domain-containing protein"/>
    <property type="match status" value="1"/>
</dbReference>
<dbReference type="Gene3D" id="2.60.40.150">
    <property type="entry name" value="C2 domain"/>
    <property type="match status" value="3"/>
</dbReference>
<dbReference type="InterPro" id="IPR000008">
    <property type="entry name" value="C2_dom"/>
</dbReference>
<dbReference type="InterPro" id="IPR035892">
    <property type="entry name" value="C2_domain_sf"/>
</dbReference>
<dbReference type="InterPro" id="IPR047257">
    <property type="entry name" value="C2B_MCTP_PRT_plant"/>
</dbReference>
<dbReference type="InterPro" id="IPR047258">
    <property type="entry name" value="C2C_MCTP_PRT_plant"/>
</dbReference>
<dbReference type="InterPro" id="IPR047255">
    <property type="entry name" value="C2D_MCTP_PRT_plant"/>
</dbReference>
<dbReference type="InterPro" id="IPR013583">
    <property type="entry name" value="MCTP_C"/>
</dbReference>
<dbReference type="InterPro" id="IPR047259">
    <property type="entry name" value="QUIRKY-like"/>
</dbReference>
<dbReference type="PANTHER" id="PTHR31425:SF50">
    <property type="entry name" value="FT-INTERACTING PROTEIN 3-RELATED"/>
    <property type="match status" value="1"/>
</dbReference>
<dbReference type="PANTHER" id="PTHR31425">
    <property type="entry name" value="PHOSPHORIBOSYLANTHRANILATE TRANSFERASE ISOFORM 1"/>
    <property type="match status" value="1"/>
</dbReference>
<dbReference type="Pfam" id="PF00168">
    <property type="entry name" value="C2"/>
    <property type="match status" value="3"/>
</dbReference>
<dbReference type="Pfam" id="PF08372">
    <property type="entry name" value="PRT_C"/>
    <property type="match status" value="1"/>
</dbReference>
<dbReference type="SMART" id="SM00239">
    <property type="entry name" value="C2"/>
    <property type="match status" value="3"/>
</dbReference>
<dbReference type="SUPFAM" id="SSF49562">
    <property type="entry name" value="C2 domain (Calcium/lipid-binding domain, CaLB)"/>
    <property type="match status" value="3"/>
</dbReference>
<dbReference type="PROSITE" id="PS50004">
    <property type="entry name" value="C2"/>
    <property type="match status" value="3"/>
</dbReference>
<sequence length="773" mass="89193">MQRPPPEDFSLKETRPHLGGGKLSGDKLTSTYDLVEQMQYLYVRVVKAKELPGKDMTGSCDPYVEVKLGNYKGTTRHFEKKSNPEWNQVFAFSKDRIQASFLEATVKDKDFVKDDLIGRVVFDLNEVPKRVPPDSPLAPQWYRLEDRKGDKVKGELMLAVWFGTQADEAFPEAWHSDAATVSGTDALANIRSKVYLSPKLWYLRVNVIEAQDLIPTDKQRYPEVYVKAIVGNQALRTRVSQSRTINPMWNEDLMFVAAEPFEEPLILSVEDRVAPNKDEVLGRCAIPLQYLDRRFDHKPVNSRWYNLEKHIMVDGEKKETKFASRIHMRICLEGGYHVLDESTHYSSDLRPTAKQLWKPNIGVLELGILNATGLMPMKTKDGRGTTDAYCVAKYGQKWIRTRTIIDSFTPRWNEQYTWEVFDPCTVVTVGVFDNCHLHGGEKIGGAKDSRIGKVRIRLSTLETDRVYTHSYPLLVLHPNGVKKMGEIHLAVRFTCSSLLNMMYMYSQPLLPKMHYIHPLTVSQLDNLRHQATQIVSMRLTRAEPPLRKEVVEYMLDVGSHMWSMRRSKANFFRIMGVLSGLIAVGKWFEQICNWKNPITTVLIHLLFIILVLYPELILPTIFLYLFLIGIWYYRWRPRHPPHMDTRLSHADSAHPDELDEEFDTFPTSRPSDIVRMRYDRLRSIAGRIQTVVGDLATQGERLQSLLSWRDPRATALFVLFCLIAAVILYVTPFQVVALCIGIYALRHPRFRYKLPSVPLNFFRRLPARTDCML</sequence>
<name>FTIP3_ARATH</name>
<accession>Q9M2R0</accession>
<accession>A0A178VJU5</accession>
<accession>Q0TV71</accession>
<accession>Q94JQ8</accession>
<reference key="1">
    <citation type="journal article" date="2000" name="Nature">
        <title>Sequence and analysis of chromosome 3 of the plant Arabidopsis thaliana.</title>
        <authorList>
            <person name="Salanoubat M."/>
            <person name="Lemcke K."/>
            <person name="Rieger M."/>
            <person name="Ansorge W."/>
            <person name="Unseld M."/>
            <person name="Fartmann B."/>
            <person name="Valle G."/>
            <person name="Bloecker H."/>
            <person name="Perez-Alonso M."/>
            <person name="Obermaier B."/>
            <person name="Delseny M."/>
            <person name="Boutry M."/>
            <person name="Grivell L.A."/>
            <person name="Mache R."/>
            <person name="Puigdomenech P."/>
            <person name="De Simone V."/>
            <person name="Choisne N."/>
            <person name="Artiguenave F."/>
            <person name="Robert C."/>
            <person name="Brottier P."/>
            <person name="Wincker P."/>
            <person name="Cattolico L."/>
            <person name="Weissenbach J."/>
            <person name="Saurin W."/>
            <person name="Quetier F."/>
            <person name="Schaefer M."/>
            <person name="Mueller-Auer S."/>
            <person name="Gabel C."/>
            <person name="Fuchs M."/>
            <person name="Benes V."/>
            <person name="Wurmbach E."/>
            <person name="Drzonek H."/>
            <person name="Erfle H."/>
            <person name="Jordan N."/>
            <person name="Bangert S."/>
            <person name="Wiedelmann R."/>
            <person name="Kranz H."/>
            <person name="Voss H."/>
            <person name="Holland R."/>
            <person name="Brandt P."/>
            <person name="Nyakatura G."/>
            <person name="Vezzi A."/>
            <person name="D'Angelo M."/>
            <person name="Pallavicini A."/>
            <person name="Toppo S."/>
            <person name="Simionati B."/>
            <person name="Conrad A."/>
            <person name="Hornischer K."/>
            <person name="Kauer G."/>
            <person name="Loehnert T.-H."/>
            <person name="Nordsiek G."/>
            <person name="Reichelt J."/>
            <person name="Scharfe M."/>
            <person name="Schoen O."/>
            <person name="Bargues M."/>
            <person name="Terol J."/>
            <person name="Climent J."/>
            <person name="Navarro P."/>
            <person name="Collado C."/>
            <person name="Perez-Perez A."/>
            <person name="Ottenwaelder B."/>
            <person name="Duchemin D."/>
            <person name="Cooke R."/>
            <person name="Laudie M."/>
            <person name="Berger-Llauro C."/>
            <person name="Purnelle B."/>
            <person name="Masuy D."/>
            <person name="de Haan M."/>
            <person name="Maarse A.C."/>
            <person name="Alcaraz J.-P."/>
            <person name="Cottet A."/>
            <person name="Casacuberta E."/>
            <person name="Monfort A."/>
            <person name="Argiriou A."/>
            <person name="Flores M."/>
            <person name="Liguori R."/>
            <person name="Vitale D."/>
            <person name="Mannhaupt G."/>
            <person name="Haase D."/>
            <person name="Schoof H."/>
            <person name="Rudd S."/>
            <person name="Zaccaria P."/>
            <person name="Mewes H.-W."/>
            <person name="Mayer K.F.X."/>
            <person name="Kaul S."/>
            <person name="Town C.D."/>
            <person name="Koo H.L."/>
            <person name="Tallon L.J."/>
            <person name="Jenkins J."/>
            <person name="Rooney T."/>
            <person name="Rizzo M."/>
            <person name="Walts A."/>
            <person name="Utterback T."/>
            <person name="Fujii C.Y."/>
            <person name="Shea T.P."/>
            <person name="Creasy T.H."/>
            <person name="Haas B."/>
            <person name="Maiti R."/>
            <person name="Wu D."/>
            <person name="Peterson J."/>
            <person name="Van Aken S."/>
            <person name="Pai G."/>
            <person name="Militscher J."/>
            <person name="Sellers P."/>
            <person name="Gill J.E."/>
            <person name="Feldblyum T.V."/>
            <person name="Preuss D."/>
            <person name="Lin X."/>
            <person name="Nierman W.C."/>
            <person name="Salzberg S.L."/>
            <person name="White O."/>
            <person name="Venter J.C."/>
            <person name="Fraser C.M."/>
            <person name="Kaneko T."/>
            <person name="Nakamura Y."/>
            <person name="Sato S."/>
            <person name="Kato T."/>
            <person name="Asamizu E."/>
            <person name="Sasamoto S."/>
            <person name="Kimura T."/>
            <person name="Idesawa K."/>
            <person name="Kawashima K."/>
            <person name="Kishida Y."/>
            <person name="Kiyokawa C."/>
            <person name="Kohara M."/>
            <person name="Matsumoto M."/>
            <person name="Matsuno A."/>
            <person name="Muraki A."/>
            <person name="Nakayama S."/>
            <person name="Nakazaki N."/>
            <person name="Shinpo S."/>
            <person name="Takeuchi C."/>
            <person name="Wada T."/>
            <person name="Watanabe A."/>
            <person name="Yamada M."/>
            <person name="Yasuda M."/>
            <person name="Tabata S."/>
        </authorList>
    </citation>
    <scope>NUCLEOTIDE SEQUENCE [LARGE SCALE GENOMIC DNA]</scope>
    <source>
        <strain>cv. Columbia</strain>
    </source>
</reference>
<reference key="2">
    <citation type="journal article" date="2017" name="Plant J.">
        <title>Araport11: a complete reannotation of the Arabidopsis thaliana reference genome.</title>
        <authorList>
            <person name="Cheng C.Y."/>
            <person name="Krishnakumar V."/>
            <person name="Chan A.P."/>
            <person name="Thibaud-Nissen F."/>
            <person name="Schobel S."/>
            <person name="Town C.D."/>
        </authorList>
    </citation>
    <scope>GENOME REANNOTATION</scope>
    <source>
        <strain>cv. Columbia</strain>
    </source>
</reference>
<reference key="3">
    <citation type="journal article" date="2003" name="Science">
        <title>Empirical analysis of transcriptional activity in the Arabidopsis genome.</title>
        <authorList>
            <person name="Yamada K."/>
            <person name="Lim J."/>
            <person name="Dale J.M."/>
            <person name="Chen H."/>
            <person name="Shinn P."/>
            <person name="Palm C.J."/>
            <person name="Southwick A.M."/>
            <person name="Wu H.C."/>
            <person name="Kim C.J."/>
            <person name="Nguyen M."/>
            <person name="Pham P.K."/>
            <person name="Cheuk R.F."/>
            <person name="Karlin-Newmann G."/>
            <person name="Liu S.X."/>
            <person name="Lam B."/>
            <person name="Sakano H."/>
            <person name="Wu T."/>
            <person name="Yu G."/>
            <person name="Miranda M."/>
            <person name="Quach H.L."/>
            <person name="Tripp M."/>
            <person name="Chang C.H."/>
            <person name="Lee J.M."/>
            <person name="Toriumi M.J."/>
            <person name="Chan M.M."/>
            <person name="Tang C.C."/>
            <person name="Onodera C.S."/>
            <person name="Deng J.M."/>
            <person name="Akiyama K."/>
            <person name="Ansari Y."/>
            <person name="Arakawa T."/>
            <person name="Banh J."/>
            <person name="Banno F."/>
            <person name="Bowser L."/>
            <person name="Brooks S.Y."/>
            <person name="Carninci P."/>
            <person name="Chao Q."/>
            <person name="Choy N."/>
            <person name="Enju A."/>
            <person name="Goldsmith A.D."/>
            <person name="Gurjal M."/>
            <person name="Hansen N.F."/>
            <person name="Hayashizaki Y."/>
            <person name="Johnson-Hopson C."/>
            <person name="Hsuan V.W."/>
            <person name="Iida K."/>
            <person name="Karnes M."/>
            <person name="Khan S."/>
            <person name="Koesema E."/>
            <person name="Ishida J."/>
            <person name="Jiang P.X."/>
            <person name="Jones T."/>
            <person name="Kawai J."/>
            <person name="Kamiya A."/>
            <person name="Meyers C."/>
            <person name="Nakajima M."/>
            <person name="Narusaka M."/>
            <person name="Seki M."/>
            <person name="Sakurai T."/>
            <person name="Satou M."/>
            <person name="Tamse R."/>
            <person name="Vaysberg M."/>
            <person name="Wallender E.K."/>
            <person name="Wong C."/>
            <person name="Yamamura Y."/>
            <person name="Yuan S."/>
            <person name="Shinozaki K."/>
            <person name="Davis R.W."/>
            <person name="Theologis A."/>
            <person name="Ecker J.R."/>
        </authorList>
    </citation>
    <scope>NUCLEOTIDE SEQUENCE [LARGE SCALE MRNA]</scope>
    <source>
        <strain>cv. Columbia</strain>
    </source>
</reference>
<reference key="4">
    <citation type="submission" date="2006-07" db="EMBL/GenBank/DDBJ databases">
        <title>Large-scale analysis of RIKEN Arabidopsis full-length (RAFL) cDNAs.</title>
        <authorList>
            <person name="Totoki Y."/>
            <person name="Seki M."/>
            <person name="Ishida J."/>
            <person name="Nakajima M."/>
            <person name="Enju A."/>
            <person name="Kamiya A."/>
            <person name="Narusaka M."/>
            <person name="Shin-i T."/>
            <person name="Nakagawa M."/>
            <person name="Sakamoto N."/>
            <person name="Oishi K."/>
            <person name="Kohara Y."/>
            <person name="Kobayashi M."/>
            <person name="Toyoda A."/>
            <person name="Sakaki Y."/>
            <person name="Sakurai T."/>
            <person name="Iida K."/>
            <person name="Akiyama K."/>
            <person name="Satou M."/>
            <person name="Toyoda T."/>
            <person name="Konagaya A."/>
            <person name="Carninci P."/>
            <person name="Kawai J."/>
            <person name="Hayashizaki Y."/>
            <person name="Shinozaki K."/>
        </authorList>
    </citation>
    <scope>NUCLEOTIDE SEQUENCE [LARGE SCALE MRNA]</scope>
    <source>
        <strain>cv. Columbia</strain>
    </source>
</reference>
<reference key="5">
    <citation type="journal article" date="2018" name="Cell Rep.">
        <title>FTIP-dependent STM trafficking regulates shoot meristem development in Arabidopsis.</title>
        <authorList>
            <person name="Liu L."/>
            <person name="Li C."/>
            <person name="Song S."/>
            <person name="Teo Z.W.N."/>
            <person name="Shen L."/>
            <person name="Wang Y."/>
            <person name="Jackson D."/>
            <person name="Yu H."/>
        </authorList>
    </citation>
    <scope>FUNCTION</scope>
    <scope>DISRUPTION PHENOTYPE</scope>
    <scope>TISSUE SPECIFICITY</scope>
    <scope>SUBCELLULAR LOCATION</scope>
    <scope>INTERACTION WITH STM</scope>
    <source>
        <strain>cv. Columbia</strain>
    </source>
</reference>
<reference key="6">
    <citation type="journal article" date="2018" name="Plant Physiol.">
        <title>Characterization of multiple C2 domain and transmembrane region proteins in Arabidopsis.</title>
        <authorList>
            <person name="Liu L."/>
            <person name="Li C."/>
            <person name="Liang Z."/>
            <person name="Yu H."/>
        </authorList>
    </citation>
    <scope>TISSUE SPECIFICITY</scope>
    <scope>DEVELOPMENTAL STAGE</scope>
    <scope>SUBCELLULAR LOCATION</scope>
    <scope>GENE FAMILY</scope>
    <scope>NOMENCLATURE</scope>
    <source>
        <strain>cv. Columbia</strain>
    </source>
</reference>
<gene>
    <name evidence="9" type="primary">FTIP3</name>
    <name evidence="8" type="synonym">MCTP3</name>
    <name evidence="11" type="ordered locus">At3g57880</name>
    <name evidence="12" type="ORF">T10K17.90</name>
</gene>
<keyword id="KW-0106">Calcium</keyword>
<keyword id="KW-1003">Cell membrane</keyword>
<keyword id="KW-0963">Cytoplasm</keyword>
<keyword id="KW-0256">Endoplasmic reticulum</keyword>
<keyword id="KW-0967">Endosome</keyword>
<keyword id="KW-0328">Glycosyltransferase</keyword>
<keyword id="KW-0333">Golgi apparatus</keyword>
<keyword id="KW-0472">Membrane</keyword>
<keyword id="KW-0479">Metal-binding</keyword>
<keyword id="KW-1185">Reference proteome</keyword>
<keyword id="KW-0677">Repeat</keyword>
<keyword id="KW-0808">Transferase</keyword>
<keyword id="KW-0812">Transmembrane</keyword>
<keyword id="KW-1133">Transmembrane helix</keyword>
<proteinExistence type="evidence at protein level"/>
<protein>
    <recommendedName>
        <fullName evidence="9">FT-interacting protein 3</fullName>
    </recommendedName>
    <alternativeName>
        <fullName evidence="8">Multiple C2 domain and transmembrane region protein 3</fullName>
    </alternativeName>
</protein>
<evidence type="ECO:0000250" key="1">
    <source>
        <dbReference type="UniProtKB" id="Q9C8H3"/>
    </source>
</evidence>
<evidence type="ECO:0000250" key="2">
    <source>
        <dbReference type="UniProtKB" id="Q9FL59"/>
    </source>
</evidence>
<evidence type="ECO:0000255" key="3"/>
<evidence type="ECO:0000255" key="4">
    <source>
        <dbReference type="PROSITE-ProRule" id="PRU00041"/>
    </source>
</evidence>
<evidence type="ECO:0000256" key="5">
    <source>
        <dbReference type="SAM" id="MobiDB-lite"/>
    </source>
</evidence>
<evidence type="ECO:0000269" key="6">
    <source>
    </source>
</evidence>
<evidence type="ECO:0000269" key="7">
    <source>
    </source>
</evidence>
<evidence type="ECO:0000303" key="8">
    <source>
    </source>
</evidence>
<evidence type="ECO:0000303" key="9">
    <source>
    </source>
</evidence>
<evidence type="ECO:0000305" key="10"/>
<evidence type="ECO:0000312" key="11">
    <source>
        <dbReference type="Araport" id="AT3G57880"/>
    </source>
</evidence>
<evidence type="ECO:0000312" key="12">
    <source>
        <dbReference type="EMBL" id="CAB67616.1"/>
    </source>
</evidence>